<organism>
    <name type="scientific">Borrelia duttonii (strain Ly)</name>
    <dbReference type="NCBI Taxonomy" id="412419"/>
    <lineage>
        <taxon>Bacteria</taxon>
        <taxon>Pseudomonadati</taxon>
        <taxon>Spirochaetota</taxon>
        <taxon>Spirochaetia</taxon>
        <taxon>Spirochaetales</taxon>
        <taxon>Borreliaceae</taxon>
        <taxon>Borrelia</taxon>
    </lineage>
</organism>
<reference key="1">
    <citation type="journal article" date="2008" name="PLoS Genet.">
        <title>The genome of Borrelia recurrentis, the agent of deadly louse-borne relapsing fever, is a degraded subset of tick-borne Borrelia duttonii.</title>
        <authorList>
            <person name="Lescot M."/>
            <person name="Audic S."/>
            <person name="Robert C."/>
            <person name="Nguyen T.T."/>
            <person name="Blanc G."/>
            <person name="Cutler S.J."/>
            <person name="Wincker P."/>
            <person name="Couloux A."/>
            <person name="Claverie J.-M."/>
            <person name="Raoult D."/>
            <person name="Drancourt M."/>
        </authorList>
    </citation>
    <scope>NUCLEOTIDE SEQUENCE [LARGE SCALE GENOMIC DNA]</scope>
    <source>
        <strain>Ly</strain>
    </source>
</reference>
<sequence length="496" mass="55930">MKYILSIDQGTTSSRAIIFDRNANIKGFAQKDFKQIYPHPSWVEHNPNEIWSSLLEIISEALANARTHPNEIATIGITNQRETTIIWDRYTGQPIYNAIVWQDRRTAKICDELKTQGKDKIFLEKTGLVLDPYFSGTKIKWILDNVSQARERAEKGELCFGTIDTWIIWNLTKGKIHITDYSNASRTLLLNINSLNWDDDLLQILNIPKSILPELKQSSEIYGKIDSSIMGTEINISGIAGDQFAATFGQSCLQKGMAKNTYGTGCFTTVNIGHKPIINEQKILTSIAWVKKNITTYVFEGSIFIGGAVIQWLRDNLELFKKSSDAEILAASVNNNGGIYFVPAFVGLGTPHWDPYARGTIIGLTRSSTKEHITRAALESIAFQSFDVLTEMKNSIKGFDIKELRVDGKASQNNLLMQFQADILQCNVVRPKITETTALGAAYLAGLAIGYWENTEEITSLWKSDKIFEPLMKQSQREDLIYNWHKAINRAKSWIE</sequence>
<gene>
    <name evidence="1" type="primary">glpK</name>
    <name type="ordered locus">BDU_241</name>
</gene>
<comment type="function">
    <text evidence="1">Key enzyme in the regulation of glycerol uptake and metabolism. Catalyzes the phosphorylation of glycerol to yield sn-glycerol 3-phosphate.</text>
</comment>
<comment type="catalytic activity">
    <reaction evidence="1">
        <text>glycerol + ATP = sn-glycerol 3-phosphate + ADP + H(+)</text>
        <dbReference type="Rhea" id="RHEA:21644"/>
        <dbReference type="ChEBI" id="CHEBI:15378"/>
        <dbReference type="ChEBI" id="CHEBI:17754"/>
        <dbReference type="ChEBI" id="CHEBI:30616"/>
        <dbReference type="ChEBI" id="CHEBI:57597"/>
        <dbReference type="ChEBI" id="CHEBI:456216"/>
        <dbReference type="EC" id="2.7.1.30"/>
    </reaction>
</comment>
<comment type="activity regulation">
    <text evidence="1">Inhibited by fructose 1,6-bisphosphate (FBP).</text>
</comment>
<comment type="pathway">
    <text evidence="1">Polyol metabolism; glycerol degradation via glycerol kinase pathway; sn-glycerol 3-phosphate from glycerol: step 1/1.</text>
</comment>
<comment type="similarity">
    <text evidence="1">Belongs to the FGGY kinase family.</text>
</comment>
<dbReference type="EC" id="2.7.1.30" evidence="1"/>
<dbReference type="EMBL" id="CP000976">
    <property type="protein sequence ID" value="ACH93194.1"/>
    <property type="molecule type" value="Genomic_DNA"/>
</dbReference>
<dbReference type="RefSeq" id="WP_012538006.1">
    <property type="nucleotide sequence ID" value="NC_011229.1"/>
</dbReference>
<dbReference type="SMR" id="B5RL65"/>
<dbReference type="STRING" id="412419.BDU_241"/>
<dbReference type="KEGG" id="bdu:BDU_241"/>
<dbReference type="eggNOG" id="COG0554">
    <property type="taxonomic scope" value="Bacteria"/>
</dbReference>
<dbReference type="HOGENOM" id="CLU_009281_2_3_12"/>
<dbReference type="OrthoDB" id="9805576at2"/>
<dbReference type="UniPathway" id="UPA00618">
    <property type="reaction ID" value="UER00672"/>
</dbReference>
<dbReference type="Proteomes" id="UP000000611">
    <property type="component" value="Chromosome"/>
</dbReference>
<dbReference type="GO" id="GO:0005829">
    <property type="term" value="C:cytosol"/>
    <property type="evidence" value="ECO:0007669"/>
    <property type="project" value="TreeGrafter"/>
</dbReference>
<dbReference type="GO" id="GO:0005524">
    <property type="term" value="F:ATP binding"/>
    <property type="evidence" value="ECO:0007669"/>
    <property type="project" value="UniProtKB-UniRule"/>
</dbReference>
<dbReference type="GO" id="GO:0004370">
    <property type="term" value="F:glycerol kinase activity"/>
    <property type="evidence" value="ECO:0000250"/>
    <property type="project" value="UniProtKB"/>
</dbReference>
<dbReference type="GO" id="GO:0019563">
    <property type="term" value="P:glycerol catabolic process"/>
    <property type="evidence" value="ECO:0007669"/>
    <property type="project" value="UniProtKB-UniRule"/>
</dbReference>
<dbReference type="GO" id="GO:0006071">
    <property type="term" value="P:glycerol metabolic process"/>
    <property type="evidence" value="ECO:0000250"/>
    <property type="project" value="UniProtKB"/>
</dbReference>
<dbReference type="GO" id="GO:0006072">
    <property type="term" value="P:glycerol-3-phosphate metabolic process"/>
    <property type="evidence" value="ECO:0007669"/>
    <property type="project" value="InterPro"/>
</dbReference>
<dbReference type="CDD" id="cd07786">
    <property type="entry name" value="FGGY_EcGK_like"/>
    <property type="match status" value="1"/>
</dbReference>
<dbReference type="FunFam" id="3.30.420.40:FF:000007">
    <property type="entry name" value="Glycerol kinase"/>
    <property type="match status" value="1"/>
</dbReference>
<dbReference type="FunFam" id="3.30.420.40:FF:000008">
    <property type="entry name" value="Glycerol kinase"/>
    <property type="match status" value="1"/>
</dbReference>
<dbReference type="Gene3D" id="3.30.420.40">
    <property type="match status" value="2"/>
</dbReference>
<dbReference type="HAMAP" id="MF_00186">
    <property type="entry name" value="Glycerol_kin"/>
    <property type="match status" value="1"/>
</dbReference>
<dbReference type="InterPro" id="IPR043129">
    <property type="entry name" value="ATPase_NBD"/>
</dbReference>
<dbReference type="InterPro" id="IPR000577">
    <property type="entry name" value="Carb_kinase_FGGY"/>
</dbReference>
<dbReference type="InterPro" id="IPR018483">
    <property type="entry name" value="Carb_kinase_FGGY_CS"/>
</dbReference>
<dbReference type="InterPro" id="IPR018485">
    <property type="entry name" value="FGGY_C"/>
</dbReference>
<dbReference type="InterPro" id="IPR018484">
    <property type="entry name" value="FGGY_N"/>
</dbReference>
<dbReference type="InterPro" id="IPR005999">
    <property type="entry name" value="Glycerol_kin"/>
</dbReference>
<dbReference type="NCBIfam" id="TIGR01311">
    <property type="entry name" value="glycerol_kin"/>
    <property type="match status" value="1"/>
</dbReference>
<dbReference type="NCBIfam" id="NF000756">
    <property type="entry name" value="PRK00047.1"/>
    <property type="match status" value="1"/>
</dbReference>
<dbReference type="PANTHER" id="PTHR10196:SF69">
    <property type="entry name" value="GLYCEROL KINASE"/>
    <property type="match status" value="1"/>
</dbReference>
<dbReference type="PANTHER" id="PTHR10196">
    <property type="entry name" value="SUGAR KINASE"/>
    <property type="match status" value="1"/>
</dbReference>
<dbReference type="Pfam" id="PF02782">
    <property type="entry name" value="FGGY_C"/>
    <property type="match status" value="1"/>
</dbReference>
<dbReference type="Pfam" id="PF00370">
    <property type="entry name" value="FGGY_N"/>
    <property type="match status" value="1"/>
</dbReference>
<dbReference type="PIRSF" id="PIRSF000538">
    <property type="entry name" value="GlpK"/>
    <property type="match status" value="1"/>
</dbReference>
<dbReference type="SUPFAM" id="SSF53067">
    <property type="entry name" value="Actin-like ATPase domain"/>
    <property type="match status" value="2"/>
</dbReference>
<dbReference type="PROSITE" id="PS00933">
    <property type="entry name" value="FGGY_KINASES_1"/>
    <property type="match status" value="1"/>
</dbReference>
<dbReference type="PROSITE" id="PS00445">
    <property type="entry name" value="FGGY_KINASES_2"/>
    <property type="match status" value="1"/>
</dbReference>
<accession>B5RL65</accession>
<evidence type="ECO:0000255" key="1">
    <source>
        <dbReference type="HAMAP-Rule" id="MF_00186"/>
    </source>
</evidence>
<protein>
    <recommendedName>
        <fullName evidence="1">Glycerol kinase</fullName>
        <ecNumber evidence="1">2.7.1.30</ecNumber>
    </recommendedName>
    <alternativeName>
        <fullName evidence="1">ATP:glycerol 3-phosphotransferase</fullName>
    </alternativeName>
    <alternativeName>
        <fullName evidence="1">Glycerokinase</fullName>
        <shortName evidence="1">GK</shortName>
    </alternativeName>
</protein>
<proteinExistence type="inferred from homology"/>
<feature type="chain" id="PRO_1000098717" description="Glycerol kinase">
    <location>
        <begin position="1"/>
        <end position="496"/>
    </location>
</feature>
<feature type="binding site" evidence="1">
    <location>
        <position position="11"/>
    </location>
    <ligand>
        <name>ADP</name>
        <dbReference type="ChEBI" id="CHEBI:456216"/>
    </ligand>
</feature>
<feature type="binding site" evidence="1">
    <location>
        <position position="11"/>
    </location>
    <ligand>
        <name>ATP</name>
        <dbReference type="ChEBI" id="CHEBI:30616"/>
    </ligand>
</feature>
<feature type="binding site" evidence="1">
    <location>
        <position position="11"/>
    </location>
    <ligand>
        <name>sn-glycerol 3-phosphate</name>
        <dbReference type="ChEBI" id="CHEBI:57597"/>
    </ligand>
</feature>
<feature type="binding site" evidence="1">
    <location>
        <position position="12"/>
    </location>
    <ligand>
        <name>ATP</name>
        <dbReference type="ChEBI" id="CHEBI:30616"/>
    </ligand>
</feature>
<feature type="binding site" evidence="1">
    <location>
        <position position="13"/>
    </location>
    <ligand>
        <name>ATP</name>
        <dbReference type="ChEBI" id="CHEBI:30616"/>
    </ligand>
</feature>
<feature type="binding site" evidence="1">
    <location>
        <position position="15"/>
    </location>
    <ligand>
        <name>ADP</name>
        <dbReference type="ChEBI" id="CHEBI:456216"/>
    </ligand>
</feature>
<feature type="binding site" evidence="1">
    <location>
        <position position="81"/>
    </location>
    <ligand>
        <name>glycerol</name>
        <dbReference type="ChEBI" id="CHEBI:17754"/>
    </ligand>
</feature>
<feature type="binding site" evidence="1">
    <location>
        <position position="81"/>
    </location>
    <ligand>
        <name>sn-glycerol 3-phosphate</name>
        <dbReference type="ChEBI" id="CHEBI:57597"/>
    </ligand>
</feature>
<feature type="binding site" evidence="1">
    <location>
        <position position="82"/>
    </location>
    <ligand>
        <name>glycerol</name>
        <dbReference type="ChEBI" id="CHEBI:17754"/>
    </ligand>
</feature>
<feature type="binding site" evidence="1">
    <location>
        <position position="82"/>
    </location>
    <ligand>
        <name>sn-glycerol 3-phosphate</name>
        <dbReference type="ChEBI" id="CHEBI:57597"/>
    </ligand>
</feature>
<feature type="binding site" evidence="1">
    <location>
        <position position="133"/>
    </location>
    <ligand>
        <name>glycerol</name>
        <dbReference type="ChEBI" id="CHEBI:17754"/>
    </ligand>
</feature>
<feature type="binding site" evidence="1">
    <location>
        <position position="133"/>
    </location>
    <ligand>
        <name>sn-glycerol 3-phosphate</name>
        <dbReference type="ChEBI" id="CHEBI:57597"/>
    </ligand>
</feature>
<feature type="binding site" evidence="1">
    <location>
        <position position="242"/>
    </location>
    <ligand>
        <name>glycerol</name>
        <dbReference type="ChEBI" id="CHEBI:17754"/>
    </ligand>
</feature>
<feature type="binding site" evidence="1">
    <location>
        <position position="242"/>
    </location>
    <ligand>
        <name>sn-glycerol 3-phosphate</name>
        <dbReference type="ChEBI" id="CHEBI:57597"/>
    </ligand>
</feature>
<feature type="binding site" evidence="1">
    <location>
        <position position="243"/>
    </location>
    <ligand>
        <name>glycerol</name>
        <dbReference type="ChEBI" id="CHEBI:17754"/>
    </ligand>
</feature>
<feature type="binding site" evidence="1">
    <location>
        <position position="264"/>
    </location>
    <ligand>
        <name>ADP</name>
        <dbReference type="ChEBI" id="CHEBI:456216"/>
    </ligand>
</feature>
<feature type="binding site" evidence="1">
    <location>
        <position position="264"/>
    </location>
    <ligand>
        <name>ATP</name>
        <dbReference type="ChEBI" id="CHEBI:30616"/>
    </ligand>
</feature>
<feature type="binding site" evidence="1">
    <location>
        <position position="307"/>
    </location>
    <ligand>
        <name>ADP</name>
        <dbReference type="ChEBI" id="CHEBI:456216"/>
    </ligand>
</feature>
<feature type="binding site" evidence="1">
    <location>
        <position position="307"/>
    </location>
    <ligand>
        <name>ATP</name>
        <dbReference type="ChEBI" id="CHEBI:30616"/>
    </ligand>
</feature>
<feature type="binding site" evidence="1">
    <location>
        <position position="311"/>
    </location>
    <ligand>
        <name>ATP</name>
        <dbReference type="ChEBI" id="CHEBI:30616"/>
    </ligand>
</feature>
<feature type="binding site" evidence="1">
    <location>
        <position position="413"/>
    </location>
    <ligand>
        <name>ADP</name>
        <dbReference type="ChEBI" id="CHEBI:456216"/>
    </ligand>
</feature>
<keyword id="KW-0067">ATP-binding</keyword>
<keyword id="KW-0319">Glycerol metabolism</keyword>
<keyword id="KW-0418">Kinase</keyword>
<keyword id="KW-0547">Nucleotide-binding</keyword>
<keyword id="KW-0808">Transferase</keyword>
<name>GLPK_BORDL</name>